<comment type="function">
    <text evidence="2">Involved in the cellular defense against the biological effects of O6-methylguanine (O6-MeG) and O4-methylthymine (O4-MeT) in DNA. Repairs the methylated nucleobase in DNA by stoichiometrically transferring the methyl group to a cysteine residue in the enzyme. This is a suicide reaction: the enzyme is irreversibly inactivated. Prefers double-stranded DNA over single-stranded DNA as substrate.</text>
</comment>
<comment type="catalytic activity">
    <reaction evidence="2 3">
        <text>a 6-O-methyl-2'-deoxyguanosine in DNA + L-cysteinyl-[protein] = S-methyl-L-cysteinyl-[protein] + a 2'-deoxyguanosine in DNA</text>
        <dbReference type="Rhea" id="RHEA:24000"/>
        <dbReference type="Rhea" id="RHEA-COMP:10131"/>
        <dbReference type="Rhea" id="RHEA-COMP:10132"/>
        <dbReference type="Rhea" id="RHEA-COMP:11367"/>
        <dbReference type="Rhea" id="RHEA-COMP:11368"/>
        <dbReference type="ChEBI" id="CHEBI:29950"/>
        <dbReference type="ChEBI" id="CHEBI:82612"/>
        <dbReference type="ChEBI" id="CHEBI:85445"/>
        <dbReference type="ChEBI" id="CHEBI:85448"/>
        <dbReference type="EC" id="2.1.1.63"/>
    </reaction>
</comment>
<comment type="catalytic activity">
    <reaction evidence="2 3">
        <text>a 4-O-methyl-thymidine in DNA + L-cysteinyl-[protein] = a thymidine in DNA + S-methyl-L-cysteinyl-[protein]</text>
        <dbReference type="Rhea" id="RHEA:53428"/>
        <dbReference type="Rhea" id="RHEA-COMP:10131"/>
        <dbReference type="Rhea" id="RHEA-COMP:10132"/>
        <dbReference type="Rhea" id="RHEA-COMP:13555"/>
        <dbReference type="Rhea" id="RHEA-COMP:13556"/>
        <dbReference type="ChEBI" id="CHEBI:29950"/>
        <dbReference type="ChEBI" id="CHEBI:82612"/>
        <dbReference type="ChEBI" id="CHEBI:137386"/>
        <dbReference type="ChEBI" id="CHEBI:137387"/>
        <dbReference type="EC" id="2.1.1.63"/>
    </reaction>
</comment>
<comment type="subcellular location">
    <subcellularLocation>
        <location evidence="1">Nucleus</location>
    </subcellularLocation>
</comment>
<comment type="induction">
    <text evidence="1">In contrast to some bacterial and mammalian enzymes, MGT1 is not induced by alkylating agents.</text>
</comment>
<comment type="miscellaneous">
    <text>This enzyme catalyzes only one turnover and therefore is not strictly catalytic. According to one definition, an enzyme is a biocatalyst that acts repeatedly and over many reaction cycles.</text>
</comment>
<comment type="similarity">
    <text evidence="4">Belongs to the MGMT family.</text>
</comment>
<name>MGMT_YEAS7</name>
<gene>
    <name type="primary">MGT1</name>
    <name type="ORF">SCY_0721</name>
</gene>
<reference key="1">
    <citation type="journal article" date="2007" name="Proc. Natl. Acad. Sci. U.S.A.">
        <title>Genome sequencing and comparative analysis of Saccharomyces cerevisiae strain YJM789.</title>
        <authorList>
            <person name="Wei W."/>
            <person name="McCusker J.H."/>
            <person name="Hyman R.W."/>
            <person name="Jones T."/>
            <person name="Ning Y."/>
            <person name="Cao Z."/>
            <person name="Gu Z."/>
            <person name="Bruno D."/>
            <person name="Miranda M."/>
            <person name="Nguyen M."/>
            <person name="Wilhelmy J."/>
            <person name="Komp C."/>
            <person name="Tamse R."/>
            <person name="Wang X."/>
            <person name="Jia P."/>
            <person name="Luedi P."/>
            <person name="Oefner P.J."/>
            <person name="David L."/>
            <person name="Dietrich F.S."/>
            <person name="Li Y."/>
            <person name="Davis R.W."/>
            <person name="Steinmetz L.M."/>
        </authorList>
    </citation>
    <scope>NUCLEOTIDE SEQUENCE [LARGE SCALE GENOMIC DNA]</scope>
    <source>
        <strain>YJM789</strain>
    </source>
</reference>
<sequence length="188" mass="21471">MKELLYYTFIETEVTGAFLVFREKTQNLVFASLGNDKLFLLGKVEGFLKKHEKQDTMYDLQELKEAETYKKSIENYTICLENKMPLPSGAIPFEFLFGTDFQRKVWNELLNVEHGHVATYGDIAKRIGKPTAARSVGRACGSNNLALLVPCHRIVGSNRKLTGYKWSCKLKEQLLNNEKENSLSLSRL</sequence>
<protein>
    <recommendedName>
        <fullName>Methylated-DNA--protein-cysteine methyltransferase</fullName>
        <ecNumber evidence="2">2.1.1.63</ecNumber>
    </recommendedName>
    <alternativeName>
        <fullName>6-O-methylguanine-DNA methyltransferase</fullName>
        <shortName>MGMT</shortName>
    </alternativeName>
    <alternativeName>
        <fullName>DNA repair MTase</fullName>
    </alternativeName>
    <alternativeName>
        <fullName>O-6-methylguanine-DNA-alkyltransferase</fullName>
    </alternativeName>
</protein>
<proteinExistence type="inferred from homology"/>
<accession>A6ZXD3</accession>
<feature type="chain" id="PRO_0000333688" description="Methylated-DNA--protein-cysteine methyltransferase">
    <location>
        <begin position="1"/>
        <end position="188"/>
    </location>
</feature>
<feature type="active site" description="Nucleophile; methyl group acceptor" evidence="3">
    <location>
        <position position="151"/>
    </location>
</feature>
<feature type="binding site" evidence="1">
    <location>
        <position position="120"/>
    </location>
    <ligand>
        <name>DNA</name>
        <dbReference type="ChEBI" id="CHEBI:16991"/>
    </ligand>
</feature>
<feature type="binding site" evidence="1">
    <location>
        <position position="121"/>
    </location>
    <ligand>
        <name>DNA</name>
        <dbReference type="ChEBI" id="CHEBI:16991"/>
    </ligand>
</feature>
<feature type="binding site" evidence="1">
    <location>
        <position position="134"/>
    </location>
    <ligand>
        <name>DNA</name>
        <dbReference type="ChEBI" id="CHEBI:16991"/>
    </ligand>
</feature>
<feature type="binding site" evidence="1">
    <location>
        <position position="157"/>
    </location>
    <ligand>
        <name>DNA</name>
        <dbReference type="ChEBI" id="CHEBI:16991"/>
    </ligand>
</feature>
<dbReference type="EC" id="2.1.1.63" evidence="2"/>
<dbReference type="EMBL" id="AAFW02000145">
    <property type="protein sequence ID" value="EDN60163.1"/>
    <property type="molecule type" value="Genomic_DNA"/>
</dbReference>
<dbReference type="SMR" id="A6ZXD3"/>
<dbReference type="HOGENOM" id="CLU_000445_52_2_1"/>
<dbReference type="Proteomes" id="UP000007060">
    <property type="component" value="Unassembled WGS sequence"/>
</dbReference>
<dbReference type="GO" id="GO:0005634">
    <property type="term" value="C:nucleus"/>
    <property type="evidence" value="ECO:0007669"/>
    <property type="project" value="UniProtKB-SubCell"/>
</dbReference>
<dbReference type="GO" id="GO:0003677">
    <property type="term" value="F:DNA binding"/>
    <property type="evidence" value="ECO:0007669"/>
    <property type="project" value="UniProtKB-KW"/>
</dbReference>
<dbReference type="GO" id="GO:0003908">
    <property type="term" value="F:methylated-DNA-[protein]-cysteine S-methyltransferase activity"/>
    <property type="evidence" value="ECO:0007669"/>
    <property type="project" value="UniProtKB-EC"/>
</dbReference>
<dbReference type="GO" id="GO:0006281">
    <property type="term" value="P:DNA repair"/>
    <property type="evidence" value="ECO:0007669"/>
    <property type="project" value="UniProtKB-KW"/>
</dbReference>
<dbReference type="GO" id="GO:0032259">
    <property type="term" value="P:methylation"/>
    <property type="evidence" value="ECO:0007669"/>
    <property type="project" value="UniProtKB-KW"/>
</dbReference>
<dbReference type="CDD" id="cd06445">
    <property type="entry name" value="ATase"/>
    <property type="match status" value="1"/>
</dbReference>
<dbReference type="FunFam" id="1.10.10.10:FF:000214">
    <property type="entry name" value="Methylated-DNA--protein-cysteine methyltransferase"/>
    <property type="match status" value="1"/>
</dbReference>
<dbReference type="Gene3D" id="1.10.10.10">
    <property type="entry name" value="Winged helix-like DNA-binding domain superfamily/Winged helix DNA-binding domain"/>
    <property type="match status" value="1"/>
</dbReference>
<dbReference type="InterPro" id="IPR001497">
    <property type="entry name" value="MethylDNA_cys_MeTrfase_AS"/>
</dbReference>
<dbReference type="InterPro" id="IPR014048">
    <property type="entry name" value="MethylDNA_cys_MeTrfase_DNA-bd"/>
</dbReference>
<dbReference type="InterPro" id="IPR036217">
    <property type="entry name" value="MethylDNA_cys_MeTrfase_DNAb"/>
</dbReference>
<dbReference type="InterPro" id="IPR036388">
    <property type="entry name" value="WH-like_DNA-bd_sf"/>
</dbReference>
<dbReference type="NCBIfam" id="TIGR00589">
    <property type="entry name" value="ogt"/>
    <property type="match status" value="1"/>
</dbReference>
<dbReference type="PANTHER" id="PTHR10815">
    <property type="entry name" value="METHYLATED-DNA--PROTEIN-CYSTEINE METHYLTRANSFERASE"/>
    <property type="match status" value="1"/>
</dbReference>
<dbReference type="PANTHER" id="PTHR10815:SF13">
    <property type="entry name" value="METHYLATED-DNA--PROTEIN-CYSTEINE METHYLTRANSFERASE"/>
    <property type="match status" value="1"/>
</dbReference>
<dbReference type="Pfam" id="PF01035">
    <property type="entry name" value="DNA_binding_1"/>
    <property type="match status" value="1"/>
</dbReference>
<dbReference type="SUPFAM" id="SSF46767">
    <property type="entry name" value="Methylated DNA-protein cysteine methyltransferase, C-terminal domain"/>
    <property type="match status" value="1"/>
</dbReference>
<dbReference type="PROSITE" id="PS00374">
    <property type="entry name" value="MGMT"/>
    <property type="match status" value="1"/>
</dbReference>
<evidence type="ECO:0000250" key="1"/>
<evidence type="ECO:0000250" key="2">
    <source>
        <dbReference type="UniProtKB" id="P26188"/>
    </source>
</evidence>
<evidence type="ECO:0000255" key="3">
    <source>
        <dbReference type="PROSITE-ProRule" id="PRU10017"/>
    </source>
</evidence>
<evidence type="ECO:0000305" key="4"/>
<keyword id="KW-0227">DNA damage</keyword>
<keyword id="KW-0234">DNA repair</keyword>
<keyword id="KW-0238">DNA-binding</keyword>
<keyword id="KW-0489">Methyltransferase</keyword>
<keyword id="KW-0539">Nucleus</keyword>
<keyword id="KW-0808">Transferase</keyword>
<organism>
    <name type="scientific">Saccharomyces cerevisiae (strain YJM789)</name>
    <name type="common">Baker's yeast</name>
    <dbReference type="NCBI Taxonomy" id="307796"/>
    <lineage>
        <taxon>Eukaryota</taxon>
        <taxon>Fungi</taxon>
        <taxon>Dikarya</taxon>
        <taxon>Ascomycota</taxon>
        <taxon>Saccharomycotina</taxon>
        <taxon>Saccharomycetes</taxon>
        <taxon>Saccharomycetales</taxon>
        <taxon>Saccharomycetaceae</taxon>
        <taxon>Saccharomyces</taxon>
    </lineage>
</organism>